<reference key="1">
    <citation type="journal article" date="1996" name="FEBS Lett.">
        <title>Isolation and characterization of a cDNA encoding a sulfate transporter from Arabidopsis thaliana.</title>
        <authorList>
            <person name="Takahashi H."/>
            <person name="Sasakura N."/>
            <person name="Noji M."/>
            <person name="Saito K."/>
        </authorList>
    </citation>
    <scope>NUCLEOTIDE SEQUENCE [GENOMIC DNA]</scope>
    <scope>NUCLEOTIDE SEQUENCE [MRNA] OF 11-677</scope>
    <scope>CHARACTERIZATION</scope>
    <source>
        <strain>cv. Columbia</strain>
    </source>
</reference>
<reference key="2">
    <citation type="journal article" date="2000" name="Nature">
        <title>Sequence and analysis of chromosome 1 of the plant Arabidopsis thaliana.</title>
        <authorList>
            <person name="Theologis A."/>
            <person name="Ecker J.R."/>
            <person name="Palm C.J."/>
            <person name="Federspiel N.A."/>
            <person name="Kaul S."/>
            <person name="White O."/>
            <person name="Alonso J."/>
            <person name="Altafi H."/>
            <person name="Araujo R."/>
            <person name="Bowman C.L."/>
            <person name="Brooks S.Y."/>
            <person name="Buehler E."/>
            <person name="Chan A."/>
            <person name="Chao Q."/>
            <person name="Chen H."/>
            <person name="Cheuk R.F."/>
            <person name="Chin C.W."/>
            <person name="Chung M.K."/>
            <person name="Conn L."/>
            <person name="Conway A.B."/>
            <person name="Conway A.R."/>
            <person name="Creasy T.H."/>
            <person name="Dewar K."/>
            <person name="Dunn P."/>
            <person name="Etgu P."/>
            <person name="Feldblyum T.V."/>
            <person name="Feng J.-D."/>
            <person name="Fong B."/>
            <person name="Fujii C.Y."/>
            <person name="Gill J.E."/>
            <person name="Goldsmith A.D."/>
            <person name="Haas B."/>
            <person name="Hansen N.F."/>
            <person name="Hughes B."/>
            <person name="Huizar L."/>
            <person name="Hunter J.L."/>
            <person name="Jenkins J."/>
            <person name="Johnson-Hopson C."/>
            <person name="Khan S."/>
            <person name="Khaykin E."/>
            <person name="Kim C.J."/>
            <person name="Koo H.L."/>
            <person name="Kremenetskaia I."/>
            <person name="Kurtz D.B."/>
            <person name="Kwan A."/>
            <person name="Lam B."/>
            <person name="Langin-Hooper S."/>
            <person name="Lee A."/>
            <person name="Lee J.M."/>
            <person name="Lenz C.A."/>
            <person name="Li J.H."/>
            <person name="Li Y.-P."/>
            <person name="Lin X."/>
            <person name="Liu S.X."/>
            <person name="Liu Z.A."/>
            <person name="Luros J.S."/>
            <person name="Maiti R."/>
            <person name="Marziali A."/>
            <person name="Militscher J."/>
            <person name="Miranda M."/>
            <person name="Nguyen M."/>
            <person name="Nierman W.C."/>
            <person name="Osborne B.I."/>
            <person name="Pai G."/>
            <person name="Peterson J."/>
            <person name="Pham P.K."/>
            <person name="Rizzo M."/>
            <person name="Rooney T."/>
            <person name="Rowley D."/>
            <person name="Sakano H."/>
            <person name="Salzberg S.L."/>
            <person name="Schwartz J.R."/>
            <person name="Shinn P."/>
            <person name="Southwick A.M."/>
            <person name="Sun H."/>
            <person name="Tallon L.J."/>
            <person name="Tambunga G."/>
            <person name="Toriumi M.J."/>
            <person name="Town C.D."/>
            <person name="Utterback T."/>
            <person name="Van Aken S."/>
            <person name="Vaysberg M."/>
            <person name="Vysotskaia V.S."/>
            <person name="Walker M."/>
            <person name="Wu D."/>
            <person name="Yu G."/>
            <person name="Fraser C.M."/>
            <person name="Venter J.C."/>
            <person name="Davis R.W."/>
        </authorList>
    </citation>
    <scope>NUCLEOTIDE SEQUENCE [LARGE SCALE GENOMIC DNA]</scope>
    <source>
        <strain>cv. Columbia</strain>
    </source>
</reference>
<reference key="3">
    <citation type="journal article" date="2017" name="Plant J.">
        <title>Araport11: a complete reannotation of the Arabidopsis thaliana reference genome.</title>
        <authorList>
            <person name="Cheng C.Y."/>
            <person name="Krishnakumar V."/>
            <person name="Chan A.P."/>
            <person name="Thibaud-Nissen F."/>
            <person name="Schobel S."/>
            <person name="Town C.D."/>
        </authorList>
    </citation>
    <scope>GENOME REANNOTATION</scope>
    <source>
        <strain>cv. Columbia</strain>
    </source>
</reference>
<reference key="4">
    <citation type="journal article" date="2003" name="Science">
        <title>Empirical analysis of transcriptional activity in the Arabidopsis genome.</title>
        <authorList>
            <person name="Yamada K."/>
            <person name="Lim J."/>
            <person name="Dale J.M."/>
            <person name="Chen H."/>
            <person name="Shinn P."/>
            <person name="Palm C.J."/>
            <person name="Southwick A.M."/>
            <person name="Wu H.C."/>
            <person name="Kim C.J."/>
            <person name="Nguyen M."/>
            <person name="Pham P.K."/>
            <person name="Cheuk R.F."/>
            <person name="Karlin-Newmann G."/>
            <person name="Liu S.X."/>
            <person name="Lam B."/>
            <person name="Sakano H."/>
            <person name="Wu T."/>
            <person name="Yu G."/>
            <person name="Miranda M."/>
            <person name="Quach H.L."/>
            <person name="Tripp M."/>
            <person name="Chang C.H."/>
            <person name="Lee J.M."/>
            <person name="Toriumi M.J."/>
            <person name="Chan M.M."/>
            <person name="Tang C.C."/>
            <person name="Onodera C.S."/>
            <person name="Deng J.M."/>
            <person name="Akiyama K."/>
            <person name="Ansari Y."/>
            <person name="Arakawa T."/>
            <person name="Banh J."/>
            <person name="Banno F."/>
            <person name="Bowser L."/>
            <person name="Brooks S.Y."/>
            <person name="Carninci P."/>
            <person name="Chao Q."/>
            <person name="Choy N."/>
            <person name="Enju A."/>
            <person name="Goldsmith A.D."/>
            <person name="Gurjal M."/>
            <person name="Hansen N.F."/>
            <person name="Hayashizaki Y."/>
            <person name="Johnson-Hopson C."/>
            <person name="Hsuan V.W."/>
            <person name="Iida K."/>
            <person name="Karnes M."/>
            <person name="Khan S."/>
            <person name="Koesema E."/>
            <person name="Ishida J."/>
            <person name="Jiang P.X."/>
            <person name="Jones T."/>
            <person name="Kawai J."/>
            <person name="Kamiya A."/>
            <person name="Meyers C."/>
            <person name="Nakajima M."/>
            <person name="Narusaka M."/>
            <person name="Seki M."/>
            <person name="Sakurai T."/>
            <person name="Satou M."/>
            <person name="Tamse R."/>
            <person name="Vaysberg M."/>
            <person name="Wallender E.K."/>
            <person name="Wong C."/>
            <person name="Yamamura Y."/>
            <person name="Yuan S."/>
            <person name="Shinozaki K."/>
            <person name="Davis R.W."/>
            <person name="Theologis A."/>
            <person name="Ecker J.R."/>
        </authorList>
    </citation>
    <scope>NUCLEOTIDE SEQUENCE [LARGE SCALE MRNA] OF 4-677</scope>
    <source>
        <strain>cv. Columbia</strain>
    </source>
</reference>
<reference key="5">
    <citation type="journal article" date="2000" name="Plant J.">
        <title>The roles of three functional sulphate transporters involved in uptake and translocation of sulphate in Arabidopsis thaliana.</title>
        <authorList>
            <person name="Takahashi H."/>
            <person name="Watanabe-Takahashi A."/>
            <person name="Smith F.W."/>
            <person name="Blake-Kalff M."/>
            <person name="Hawkesford M.J."/>
            <person name="Saito K."/>
        </authorList>
    </citation>
    <scope>FUNCTION</scope>
    <scope>TISSUE SPECIFICITY</scope>
    <scope>INDUCTION</scope>
</reference>
<reference key="6">
    <citation type="journal article" date="2002" name="Plant Cell Physiol.">
        <title>Regulation of sulfur-responsive gene expression by exogenously applied cytokinins in Arabidopsis thaliana.</title>
        <authorList>
            <person name="Ohkama N."/>
            <person name="Takei K."/>
            <person name="Sakakibara H."/>
            <person name="Hayashi H."/>
            <person name="Yoneyama T."/>
            <person name="Fujiwara T."/>
        </authorList>
    </citation>
    <scope>INDUCTION</scope>
</reference>
<name>SUT22_ARATH</name>
<dbReference type="EMBL" id="AC009243">
    <property type="protein sequence ID" value="AAF17693.1"/>
    <property type="status" value="ALT_SEQ"/>
    <property type="molecule type" value="Genomic_DNA"/>
</dbReference>
<dbReference type="EMBL" id="CP002684">
    <property type="protein sequence ID" value="AEE36054.1"/>
    <property type="molecule type" value="Genomic_DNA"/>
</dbReference>
<dbReference type="EMBL" id="AY074516">
    <property type="protein sequence ID" value="AAL67130.2"/>
    <property type="status" value="ALT_INIT"/>
    <property type="molecule type" value="mRNA"/>
</dbReference>
<dbReference type="EMBL" id="AY099863">
    <property type="protein sequence ID" value="AAM20714.1"/>
    <property type="status" value="ALT_INIT"/>
    <property type="molecule type" value="mRNA"/>
</dbReference>
<dbReference type="EMBL" id="AB012047">
    <property type="protein sequence ID" value="BAA25174.1"/>
    <property type="status" value="ALT_SEQ"/>
    <property type="molecule type" value="Genomic_DNA"/>
</dbReference>
<dbReference type="EMBL" id="D85416">
    <property type="protein sequence ID" value="BAA12811.1"/>
    <property type="status" value="ALT_SEQ"/>
    <property type="molecule type" value="mRNA"/>
</dbReference>
<dbReference type="PIR" id="S74246">
    <property type="entry name" value="S74246"/>
</dbReference>
<dbReference type="RefSeq" id="NP_565165.2">
    <property type="nucleotide sequence ID" value="NM_106448.4"/>
</dbReference>
<dbReference type="SMR" id="P92946"/>
<dbReference type="FunCoup" id="P92946">
    <property type="interactions" value="391"/>
</dbReference>
<dbReference type="STRING" id="3702.P92946"/>
<dbReference type="GlyCosmos" id="P92946">
    <property type="glycosylation" value="2 sites, No reported glycans"/>
</dbReference>
<dbReference type="GlyGen" id="P92946">
    <property type="glycosylation" value="2 sites"/>
</dbReference>
<dbReference type="iPTMnet" id="P92946"/>
<dbReference type="PaxDb" id="3702-AT1G77990.1"/>
<dbReference type="ProteomicsDB" id="226755"/>
<dbReference type="EnsemblPlants" id="AT1G77990.1">
    <property type="protein sequence ID" value="AT1G77990.1"/>
    <property type="gene ID" value="AT1G77990"/>
</dbReference>
<dbReference type="GeneID" id="844134"/>
<dbReference type="Gramene" id="AT1G77990.1">
    <property type="protein sequence ID" value="AT1G77990.1"/>
    <property type="gene ID" value="AT1G77990"/>
</dbReference>
<dbReference type="KEGG" id="ath:AT1G77990"/>
<dbReference type="Araport" id="AT1G77990"/>
<dbReference type="TAIR" id="AT1G77990">
    <property type="gene designation" value="SULTR2"/>
</dbReference>
<dbReference type="eggNOG" id="KOG0236">
    <property type="taxonomic scope" value="Eukaryota"/>
</dbReference>
<dbReference type="HOGENOM" id="CLU_003182_13_2_1"/>
<dbReference type="InParanoid" id="P92946"/>
<dbReference type="OMA" id="RLRLGCW"/>
<dbReference type="PRO" id="PR:P92946"/>
<dbReference type="Proteomes" id="UP000006548">
    <property type="component" value="Chromosome 1"/>
</dbReference>
<dbReference type="ExpressionAtlas" id="P92946">
    <property type="expression patterns" value="baseline and differential"/>
</dbReference>
<dbReference type="GO" id="GO:0016020">
    <property type="term" value="C:membrane"/>
    <property type="evidence" value="ECO:0007669"/>
    <property type="project" value="UniProtKB-SubCell"/>
</dbReference>
<dbReference type="GO" id="GO:0008271">
    <property type="term" value="F:secondary active sulfate transmembrane transporter activity"/>
    <property type="evidence" value="ECO:0007669"/>
    <property type="project" value="InterPro"/>
</dbReference>
<dbReference type="GO" id="GO:0015116">
    <property type="term" value="F:sulfate transmembrane transporter activity"/>
    <property type="evidence" value="ECO:0000316"/>
    <property type="project" value="TAIR"/>
</dbReference>
<dbReference type="GO" id="GO:0015293">
    <property type="term" value="F:symporter activity"/>
    <property type="evidence" value="ECO:0007669"/>
    <property type="project" value="UniProtKB-KW"/>
</dbReference>
<dbReference type="GO" id="GO:1902358">
    <property type="term" value="P:sulfate transmembrane transport"/>
    <property type="evidence" value="ECO:0000316"/>
    <property type="project" value="TAIR"/>
</dbReference>
<dbReference type="CDD" id="cd07042">
    <property type="entry name" value="STAS_SulP_like_sulfate_transporter"/>
    <property type="match status" value="1"/>
</dbReference>
<dbReference type="FunFam" id="3.30.750.24:FF:000002">
    <property type="entry name" value="Sulfate transporter 31"/>
    <property type="match status" value="1"/>
</dbReference>
<dbReference type="Gene3D" id="3.30.750.24">
    <property type="entry name" value="STAS domain"/>
    <property type="match status" value="1"/>
</dbReference>
<dbReference type="InterPro" id="IPR018045">
    <property type="entry name" value="S04_transporter_CS"/>
</dbReference>
<dbReference type="InterPro" id="IPR011547">
    <property type="entry name" value="SLC26A/SulP_dom"/>
</dbReference>
<dbReference type="InterPro" id="IPR001902">
    <property type="entry name" value="SLC26A/SulP_fam"/>
</dbReference>
<dbReference type="InterPro" id="IPR002645">
    <property type="entry name" value="STAS_dom"/>
</dbReference>
<dbReference type="InterPro" id="IPR036513">
    <property type="entry name" value="STAS_dom_sf"/>
</dbReference>
<dbReference type="NCBIfam" id="TIGR00815">
    <property type="entry name" value="sulP"/>
    <property type="match status" value="1"/>
</dbReference>
<dbReference type="PANTHER" id="PTHR11814">
    <property type="entry name" value="SULFATE TRANSPORTER"/>
    <property type="match status" value="1"/>
</dbReference>
<dbReference type="Pfam" id="PF01740">
    <property type="entry name" value="STAS"/>
    <property type="match status" value="1"/>
</dbReference>
<dbReference type="Pfam" id="PF00916">
    <property type="entry name" value="Sulfate_transp"/>
    <property type="match status" value="1"/>
</dbReference>
<dbReference type="SUPFAM" id="SSF52091">
    <property type="entry name" value="SpoIIaa-like"/>
    <property type="match status" value="1"/>
</dbReference>
<dbReference type="PROSITE" id="PS01130">
    <property type="entry name" value="SLC26A"/>
    <property type="match status" value="1"/>
</dbReference>
<dbReference type="PROSITE" id="PS50801">
    <property type="entry name" value="STAS"/>
    <property type="match status" value="1"/>
</dbReference>
<organism>
    <name type="scientific">Arabidopsis thaliana</name>
    <name type="common">Mouse-ear cress</name>
    <dbReference type="NCBI Taxonomy" id="3702"/>
    <lineage>
        <taxon>Eukaryota</taxon>
        <taxon>Viridiplantae</taxon>
        <taxon>Streptophyta</taxon>
        <taxon>Embryophyta</taxon>
        <taxon>Tracheophyta</taxon>
        <taxon>Spermatophyta</taxon>
        <taxon>Magnoliopsida</taxon>
        <taxon>eudicotyledons</taxon>
        <taxon>Gunneridae</taxon>
        <taxon>Pentapetalae</taxon>
        <taxon>rosids</taxon>
        <taxon>malvids</taxon>
        <taxon>Brassicales</taxon>
        <taxon>Brassicaceae</taxon>
        <taxon>Camelineae</taxon>
        <taxon>Arabidopsis</taxon>
    </lineage>
</organism>
<proteinExistence type="evidence at protein level"/>
<gene>
    <name type="primary">SULTR2;2</name>
    <name type="ordered locus">At1g77990</name>
    <name type="ORF">F28K19.21</name>
</gene>
<accession>P92946</accession>
<accession>O64434</accession>
<accession>Q8LPG2</accession>
<accession>Q8VXW4</accession>
<accession>Q9SH01</accession>
<evidence type="ECO:0000255" key="1"/>
<evidence type="ECO:0000255" key="2">
    <source>
        <dbReference type="PROSITE-ProRule" id="PRU00198"/>
    </source>
</evidence>
<evidence type="ECO:0000269" key="3">
    <source>
    </source>
</evidence>
<evidence type="ECO:0000269" key="4">
    <source>
    </source>
</evidence>
<evidence type="ECO:0000305" key="5"/>
<comment type="function">
    <text evidence="3">Low-affinity H(+)/sulfate cotransporter that may be involved in the distribution of sulfate from vascular bundles to the palisade cells of the leaves. Plays a central role in the regulation of sulfate assimilation.</text>
</comment>
<comment type="subcellular location">
    <subcellularLocation>
        <location evidence="5">Membrane</location>
        <topology evidence="5">Multi-pass membrane protein</topology>
    </subcellularLocation>
</comment>
<comment type="tissue specificity">
    <text evidence="3">Expressed in the phloem in roots and in the phloem of vascular bundles in leaves.</text>
</comment>
<comment type="induction">
    <text evidence="3 4">In leaves by sulfate starvation. Up-regulated after treatment with zeatin, an exogenous cytokinin.</text>
</comment>
<comment type="similarity">
    <text evidence="5">Belongs to the SLC26A/SulP transporter (TC 2.A.53) family.</text>
</comment>
<comment type="sequence caution" evidence="5">
    <conflict type="erroneous gene model prediction">
        <sequence resource="EMBL-CDS" id="AAF17693"/>
    </conflict>
</comment>
<comment type="sequence caution" evidence="5">
    <conflict type="erroneous initiation">
        <sequence resource="EMBL-CDS" id="AAL67130"/>
    </conflict>
    <text>Truncated N-terminus.</text>
</comment>
<comment type="sequence caution" evidence="5">
    <conflict type="erroneous initiation">
        <sequence resource="EMBL-CDS" id="AAM20714"/>
    </conflict>
    <text>Truncated N-terminus.</text>
</comment>
<comment type="sequence caution" evidence="5">
    <conflict type="erroneous initiation">
        <sequence resource="EMBL-CDS" id="BAA12811"/>
    </conflict>
    <text>Truncated N-terminus.</text>
</comment>
<comment type="sequence caution" evidence="5">
    <conflict type="frameshift">
        <sequence resource="EMBL-CDS" id="BAA12811"/>
    </conflict>
</comment>
<comment type="sequence caution" evidence="5">
    <conflict type="erroneous gene model prediction">
        <sequence resource="EMBL-CDS" id="BAA25174"/>
    </conflict>
</comment>
<feature type="chain" id="PRO_0000080176" description="Sulfate transporter 2.2">
    <location>
        <begin position="1"/>
        <end position="677"/>
    </location>
</feature>
<feature type="topological domain" description="Cytoplasmic" evidence="1">
    <location>
        <begin position="1"/>
        <end position="110"/>
    </location>
</feature>
<feature type="transmembrane region" description="Helical" evidence="1">
    <location>
        <begin position="111"/>
        <end position="131"/>
    </location>
</feature>
<feature type="topological domain" description="Extracellular" evidence="1">
    <location>
        <begin position="132"/>
        <end position="133"/>
    </location>
</feature>
<feature type="transmembrane region" description="Helical" evidence="1">
    <location>
        <begin position="134"/>
        <end position="154"/>
    </location>
</feature>
<feature type="topological domain" description="Cytoplasmic" evidence="1">
    <location>
        <begin position="155"/>
        <end position="158"/>
    </location>
</feature>
<feature type="transmembrane region" description="Helical" evidence="1">
    <location>
        <begin position="159"/>
        <end position="179"/>
    </location>
</feature>
<feature type="topological domain" description="Extracellular" evidence="1">
    <location>
        <begin position="180"/>
        <end position="190"/>
    </location>
</feature>
<feature type="transmembrane region" description="Helical" evidence="1">
    <location>
        <begin position="191"/>
        <end position="211"/>
    </location>
</feature>
<feature type="topological domain" description="Cytoplasmic" evidence="1">
    <location>
        <begin position="212"/>
        <end position="213"/>
    </location>
</feature>
<feature type="transmembrane region" description="Helical" evidence="1">
    <location>
        <begin position="214"/>
        <end position="234"/>
    </location>
</feature>
<feature type="topological domain" description="Extracellular" evidence="1">
    <location>
        <begin position="235"/>
        <end position="270"/>
    </location>
</feature>
<feature type="transmembrane region" description="Helical" evidence="1">
    <location>
        <begin position="271"/>
        <end position="291"/>
    </location>
</feature>
<feature type="topological domain" description="Cytoplasmic" evidence="1">
    <location>
        <begin position="292"/>
        <end position="296"/>
    </location>
</feature>
<feature type="transmembrane region" description="Helical" evidence="1">
    <location>
        <begin position="297"/>
        <end position="317"/>
    </location>
</feature>
<feature type="topological domain" description="Extracellular" evidence="1">
    <location>
        <begin position="318"/>
        <end position="352"/>
    </location>
</feature>
<feature type="transmembrane region" description="Helical" evidence="1">
    <location>
        <begin position="353"/>
        <end position="373"/>
    </location>
</feature>
<feature type="topological domain" description="Cytoplasmic" evidence="1">
    <location>
        <begin position="374"/>
        <end position="389"/>
    </location>
</feature>
<feature type="transmembrane region" description="Helical" evidence="1">
    <location>
        <begin position="390"/>
        <end position="410"/>
    </location>
</feature>
<feature type="topological domain" description="Extracellular" evidence="1">
    <location>
        <begin position="411"/>
        <end position="422"/>
    </location>
</feature>
<feature type="transmembrane region" description="Helical" evidence="1">
    <location>
        <begin position="423"/>
        <end position="443"/>
    </location>
</feature>
<feature type="topological domain" description="Cytoplasmic" evidence="1">
    <location>
        <begin position="444"/>
        <end position="446"/>
    </location>
</feature>
<feature type="transmembrane region" description="Helical" evidence="1">
    <location>
        <begin position="447"/>
        <end position="467"/>
    </location>
</feature>
<feature type="topological domain" description="Extracellular" evidence="1">
    <location>
        <begin position="468"/>
        <end position="482"/>
    </location>
</feature>
<feature type="transmembrane region" description="Helical" evidence="1">
    <location>
        <begin position="483"/>
        <end position="503"/>
    </location>
</feature>
<feature type="topological domain" description="Cytoplasmic" evidence="1">
    <location>
        <begin position="504"/>
        <end position="677"/>
    </location>
</feature>
<feature type="domain" description="STAS" evidence="2">
    <location>
        <begin position="540"/>
        <end position="666"/>
    </location>
</feature>
<feature type="glycosylation site" description="N-linked (GlcNAc...) asparagine" evidence="1">
    <location>
        <position position="250"/>
    </location>
</feature>
<feature type="glycosylation site" description="N-linked (GlcNAc...) asparagine" evidence="1">
    <location>
        <position position="418"/>
    </location>
</feature>
<feature type="sequence conflict" description="In Ref. 4; BAA12811." evidence="5" ref="4">
    <original>K</original>
    <variation>R</variation>
    <location>
        <position position="108"/>
    </location>
</feature>
<feature type="sequence conflict" description="In Ref. 2; AAL67130." evidence="5" ref="2">
    <original>L</original>
    <variation>P</variation>
    <location>
        <position position="134"/>
    </location>
</feature>
<protein>
    <recommendedName>
        <fullName>Sulfate transporter 2.2</fullName>
    </recommendedName>
    <alternativeName>
        <fullName>AST56</fullName>
    </alternativeName>
    <alternativeName>
        <fullName>AtH14</fullName>
    </alternativeName>
</protein>
<sequence length="677" mass="74498">MQLSSLSHTSITHKDKKKKMGIELQNHQSHHEEASPAEEPMSRWLINTPEPPSMWQELIGYIRTNVLAKKKHKRNKTKNSSSNLVYSCLKSAFPILSWGRQYKLNLFKKDLMAGLTLASLCIPQSIGYANLAGLDPEYGLYTSVVPPLIYSTMGTSRELAIGPVAVVSLLLSSMVRDLQDPVTDPIAYRKIVFTVTFFAGAFQAIFGLFRLGFLVDFLSHAALVGFMAGAAIVIGLQQLKGLFGLTHFTNKTDVVSVLSSVFHSLHHPWQPLNFVIGSSFLIFILLARFIGKRNNKLFWIPAMAPLISVVLATLIVYLSNAESRGVKIVKHIKPGFNQLSVNQLQFKSPHLGQIAKIGLISAIIALTEAIAVGRSFATIKGYRLDGNKEMMAMGFMNIAGSLSSCYVATGSFSRTAVNFSAGCETVVSNIVMAITVMISLEVLTRFLYFTPTAILASIILSALPGLIDVSGALHIWKLDKLDFLVLIAAFFGVLFASVEIGLLLAVGISFARIMLSSIRPSIEALGRLSKTDIFGDINQYPMANKTAGLLTLRISSPLLCFANANFIRDRILNSVQEIEGEENEQEVLKENGLQVVILDMSCVMGVDTSGVFALEELHQELASNDIRLVIASPRWRVLHKLKRAKLDEKIKTENIYMTVGEAVDIYVRARSTSHELC</sequence>
<keyword id="KW-0325">Glycoprotein</keyword>
<keyword id="KW-0472">Membrane</keyword>
<keyword id="KW-1185">Reference proteome</keyword>
<keyword id="KW-0764">Sulfate transport</keyword>
<keyword id="KW-0769">Symport</keyword>
<keyword id="KW-0812">Transmembrane</keyword>
<keyword id="KW-1133">Transmembrane helix</keyword>
<keyword id="KW-0813">Transport</keyword>